<reference key="1">
    <citation type="journal article" date="2005" name="J. Bacteriol.">
        <title>Insights on evolution of virulence and resistance from the complete genome analysis of an early methicillin-resistant Staphylococcus aureus strain and a biofilm-producing methicillin-resistant Staphylococcus epidermidis strain.</title>
        <authorList>
            <person name="Gill S.R."/>
            <person name="Fouts D.E."/>
            <person name="Archer G.L."/>
            <person name="Mongodin E.F."/>
            <person name="DeBoy R.T."/>
            <person name="Ravel J."/>
            <person name="Paulsen I.T."/>
            <person name="Kolonay J.F."/>
            <person name="Brinkac L.M."/>
            <person name="Beanan M.J."/>
            <person name="Dodson R.J."/>
            <person name="Daugherty S.C."/>
            <person name="Madupu R."/>
            <person name="Angiuoli S.V."/>
            <person name="Durkin A.S."/>
            <person name="Haft D.H."/>
            <person name="Vamathevan J.J."/>
            <person name="Khouri H."/>
            <person name="Utterback T.R."/>
            <person name="Lee C."/>
            <person name="Dimitrov G."/>
            <person name="Jiang L."/>
            <person name="Qin H."/>
            <person name="Weidman J."/>
            <person name="Tran K."/>
            <person name="Kang K.H."/>
            <person name="Hance I.R."/>
            <person name="Nelson K.E."/>
            <person name="Fraser C.M."/>
        </authorList>
    </citation>
    <scope>NUCLEOTIDE SEQUENCE [LARGE SCALE GENOMIC DNA]</scope>
    <source>
        <strain>ATCC 35984 / DSM 28319 / BCRC 17069 / CCUG 31568 / BM 3577 / RP62A</strain>
    </source>
</reference>
<dbReference type="EMBL" id="CP000029">
    <property type="protein sequence ID" value="AAW54408.1"/>
    <property type="molecule type" value="Genomic_DNA"/>
</dbReference>
<dbReference type="RefSeq" id="WP_001831064.1">
    <property type="nucleotide sequence ID" value="NC_002976.3"/>
</dbReference>
<dbReference type="SMR" id="Q5HP55"/>
<dbReference type="STRING" id="176279.SERP1058"/>
<dbReference type="KEGG" id="ser:SERP1058"/>
<dbReference type="eggNOG" id="COG1354">
    <property type="taxonomic scope" value="Bacteria"/>
</dbReference>
<dbReference type="HOGENOM" id="CLU_038686_3_1_9"/>
<dbReference type="Proteomes" id="UP000000531">
    <property type="component" value="Chromosome"/>
</dbReference>
<dbReference type="GO" id="GO:0005737">
    <property type="term" value="C:cytoplasm"/>
    <property type="evidence" value="ECO:0007669"/>
    <property type="project" value="UniProtKB-SubCell"/>
</dbReference>
<dbReference type="GO" id="GO:0051301">
    <property type="term" value="P:cell division"/>
    <property type="evidence" value="ECO:0007669"/>
    <property type="project" value="UniProtKB-KW"/>
</dbReference>
<dbReference type="GO" id="GO:0007059">
    <property type="term" value="P:chromosome segregation"/>
    <property type="evidence" value="ECO:0007669"/>
    <property type="project" value="UniProtKB-UniRule"/>
</dbReference>
<dbReference type="GO" id="GO:0006260">
    <property type="term" value="P:DNA replication"/>
    <property type="evidence" value="ECO:0007669"/>
    <property type="project" value="UniProtKB-UniRule"/>
</dbReference>
<dbReference type="Gene3D" id="6.10.250.2410">
    <property type="match status" value="1"/>
</dbReference>
<dbReference type="Gene3D" id="1.10.10.580">
    <property type="entry name" value="Structural maintenance of chromosome 1. Chain E"/>
    <property type="match status" value="1"/>
</dbReference>
<dbReference type="HAMAP" id="MF_01805">
    <property type="entry name" value="ScpA"/>
    <property type="match status" value="1"/>
</dbReference>
<dbReference type="InterPro" id="IPR003768">
    <property type="entry name" value="ScpA"/>
</dbReference>
<dbReference type="InterPro" id="IPR023093">
    <property type="entry name" value="ScpA-like_C"/>
</dbReference>
<dbReference type="PANTHER" id="PTHR33969">
    <property type="entry name" value="SEGREGATION AND CONDENSATION PROTEIN A"/>
    <property type="match status" value="1"/>
</dbReference>
<dbReference type="PANTHER" id="PTHR33969:SF2">
    <property type="entry name" value="SEGREGATION AND CONDENSATION PROTEIN A"/>
    <property type="match status" value="1"/>
</dbReference>
<dbReference type="Pfam" id="PF02616">
    <property type="entry name" value="SMC_ScpA"/>
    <property type="match status" value="1"/>
</dbReference>
<accession>Q5HP55</accession>
<protein>
    <recommendedName>
        <fullName evidence="1">Segregation and condensation protein A</fullName>
    </recommendedName>
</protein>
<evidence type="ECO:0000255" key="1">
    <source>
        <dbReference type="HAMAP-Rule" id="MF_01805"/>
    </source>
</evidence>
<sequence>MYEVKLDAFNGPLDLLLHLIQKYEIDIYDIPMKALTEQYMQYVHAMNQLEINVASEYLVMASELLMIKSKLLLPQTSIEEDIEEDPREDLVGRLIEYQNYKEYTEILNTMKEERDLYFTKHPTDLTHLETNESWDPNQTIDLTELIVAYQRVKNRVELNTPKSVEIKKETFTIQQATAQVTERLKQHESFNFFSLFTFHEPVEQVVTHFLAILEMSKSGIVNIKQTKQFDDIDIIRGVNYSIG</sequence>
<gene>
    <name evidence="1" type="primary">scpA</name>
    <name type="ordered locus">SERP1058</name>
</gene>
<keyword id="KW-0131">Cell cycle</keyword>
<keyword id="KW-0132">Cell division</keyword>
<keyword id="KW-0159">Chromosome partition</keyword>
<keyword id="KW-0963">Cytoplasm</keyword>
<keyword id="KW-1185">Reference proteome</keyword>
<proteinExistence type="inferred from homology"/>
<organism>
    <name type="scientific">Staphylococcus epidermidis (strain ATCC 35984 / DSM 28319 / BCRC 17069 / CCUG 31568 / BM 3577 / RP62A)</name>
    <dbReference type="NCBI Taxonomy" id="176279"/>
    <lineage>
        <taxon>Bacteria</taxon>
        <taxon>Bacillati</taxon>
        <taxon>Bacillota</taxon>
        <taxon>Bacilli</taxon>
        <taxon>Bacillales</taxon>
        <taxon>Staphylococcaceae</taxon>
        <taxon>Staphylococcus</taxon>
    </lineage>
</organism>
<name>SCPA_STAEQ</name>
<comment type="function">
    <text evidence="1">Participates in chromosomal partition during cell division. May act via the formation of a condensin-like complex containing Smc and ScpB that pull DNA away from mid-cell into both cell halves.</text>
</comment>
<comment type="subunit">
    <text evidence="1">Component of a cohesin-like complex composed of ScpA, ScpB and the Smc homodimer, in which ScpA and ScpB bind to the head domain of Smc. The presence of the three proteins is required for the association of the complex with DNA.</text>
</comment>
<comment type="subcellular location">
    <subcellularLocation>
        <location evidence="1">Cytoplasm</location>
    </subcellularLocation>
    <text evidence="1">Associated with two foci at the outer edges of the nucleoid region in young cells, and at four foci within both cell halves in older cells.</text>
</comment>
<comment type="similarity">
    <text evidence="1">Belongs to the ScpA family.</text>
</comment>
<feature type="chain" id="PRO_0000211107" description="Segregation and condensation protein A">
    <location>
        <begin position="1"/>
        <end position="243"/>
    </location>
</feature>